<accession>Q3YXJ3</accession>
<feature type="chain" id="PRO_0000264149" description="Surface composition regulator">
    <location>
        <begin position="1"/>
        <end position="66"/>
    </location>
</feature>
<proteinExistence type="inferred from homology"/>
<sequence>MDHSLNSLNNFDFLARSFARMHAEGRPVDILAVTGNMDEEHRTWFCARYAWYCQQMMQARELELEH</sequence>
<dbReference type="EMBL" id="CP000038">
    <property type="protein sequence ID" value="AAZ89769.1"/>
    <property type="molecule type" value="Genomic_DNA"/>
</dbReference>
<dbReference type="RefSeq" id="WP_000350095.1">
    <property type="nucleotide sequence ID" value="NC_007384.1"/>
</dbReference>
<dbReference type="SMR" id="Q3YXJ3"/>
<dbReference type="GeneID" id="93778946"/>
<dbReference type="KEGG" id="ssn:SSON_3186"/>
<dbReference type="HOGENOM" id="CLU_185971_0_0_6"/>
<dbReference type="Proteomes" id="UP000002529">
    <property type="component" value="Chromosome"/>
</dbReference>
<dbReference type="GO" id="GO:1902201">
    <property type="term" value="P:negative regulation of bacterial-type flagellum-dependent cell motility"/>
    <property type="evidence" value="ECO:0007669"/>
    <property type="project" value="UniProtKB-UniRule"/>
</dbReference>
<dbReference type="GO" id="GO:1900191">
    <property type="term" value="P:negative regulation of single-species biofilm formation"/>
    <property type="evidence" value="ECO:0007669"/>
    <property type="project" value="UniProtKB-UniRule"/>
</dbReference>
<dbReference type="FunFam" id="1.20.970.20:FF:000001">
    <property type="entry name" value="Surface composition regulator"/>
    <property type="match status" value="1"/>
</dbReference>
<dbReference type="Gene3D" id="1.20.970.20">
    <property type="entry name" value="Glycogen synthesis protein GlgS"/>
    <property type="match status" value="1"/>
</dbReference>
<dbReference type="HAMAP" id="MF_00525">
    <property type="entry name" value="GlgS"/>
    <property type="match status" value="1"/>
</dbReference>
<dbReference type="InterPro" id="IPR015065">
    <property type="entry name" value="GlgS"/>
</dbReference>
<dbReference type="InterPro" id="IPR036295">
    <property type="entry name" value="GlgS_sf"/>
</dbReference>
<dbReference type="NCBIfam" id="NF002793">
    <property type="entry name" value="PRK02922.1"/>
    <property type="match status" value="1"/>
</dbReference>
<dbReference type="Pfam" id="PF08971">
    <property type="entry name" value="GlgS"/>
    <property type="match status" value="1"/>
</dbReference>
<dbReference type="SUPFAM" id="SSF109747">
    <property type="entry name" value="Glycogen synthesis protein GlgS"/>
    <property type="match status" value="1"/>
</dbReference>
<reference key="1">
    <citation type="journal article" date="2005" name="Nucleic Acids Res.">
        <title>Genome dynamics and diversity of Shigella species, the etiologic agents of bacillary dysentery.</title>
        <authorList>
            <person name="Yang F."/>
            <person name="Yang J."/>
            <person name="Zhang X."/>
            <person name="Chen L."/>
            <person name="Jiang Y."/>
            <person name="Yan Y."/>
            <person name="Tang X."/>
            <person name="Wang J."/>
            <person name="Xiong Z."/>
            <person name="Dong J."/>
            <person name="Xue Y."/>
            <person name="Zhu Y."/>
            <person name="Xu X."/>
            <person name="Sun L."/>
            <person name="Chen S."/>
            <person name="Nie H."/>
            <person name="Peng J."/>
            <person name="Xu J."/>
            <person name="Wang Y."/>
            <person name="Yuan Z."/>
            <person name="Wen Y."/>
            <person name="Yao Z."/>
            <person name="Shen Y."/>
            <person name="Qiang B."/>
            <person name="Hou Y."/>
            <person name="Yu J."/>
            <person name="Jin Q."/>
        </authorList>
    </citation>
    <scope>NUCLEOTIDE SEQUENCE [LARGE SCALE GENOMIC DNA]</scope>
    <source>
        <strain>Ss046</strain>
    </source>
</reference>
<evidence type="ECO:0000255" key="1">
    <source>
        <dbReference type="HAMAP-Rule" id="MF_00525"/>
    </source>
</evidence>
<organism>
    <name type="scientific">Shigella sonnei (strain Ss046)</name>
    <dbReference type="NCBI Taxonomy" id="300269"/>
    <lineage>
        <taxon>Bacteria</taxon>
        <taxon>Pseudomonadati</taxon>
        <taxon>Pseudomonadota</taxon>
        <taxon>Gammaproteobacteria</taxon>
        <taxon>Enterobacterales</taxon>
        <taxon>Enterobacteriaceae</taxon>
        <taxon>Shigella</taxon>
    </lineage>
</organism>
<name>GLGS_SHISS</name>
<keyword id="KW-1185">Reference proteome</keyword>
<protein>
    <recommendedName>
        <fullName evidence="1">Surface composition regulator</fullName>
    </recommendedName>
</protein>
<gene>
    <name evidence="1" type="primary">glgS</name>
    <name type="ordered locus">SSON_3186</name>
</gene>
<comment type="function">
    <text evidence="1">Major determinant of cell surface composition. Negatively regulates motility, adhesion and synthesis of biofilm exopolysaccharides.</text>
</comment>
<comment type="similarity">
    <text evidence="1">Belongs to the GlgS family.</text>
</comment>